<protein>
    <recommendedName>
        <fullName evidence="1">NAD kinase</fullName>
        <ecNumber evidence="1">2.7.1.23</ecNumber>
    </recommendedName>
    <alternativeName>
        <fullName evidence="1">ATP-dependent NAD kinase</fullName>
    </alternativeName>
</protein>
<organism>
    <name type="scientific">Helicobacter acinonychis (strain Sheeba)</name>
    <dbReference type="NCBI Taxonomy" id="382638"/>
    <lineage>
        <taxon>Bacteria</taxon>
        <taxon>Pseudomonadati</taxon>
        <taxon>Campylobacterota</taxon>
        <taxon>Epsilonproteobacteria</taxon>
        <taxon>Campylobacterales</taxon>
        <taxon>Helicobacteraceae</taxon>
        <taxon>Helicobacter</taxon>
    </lineage>
</organism>
<gene>
    <name evidence="1" type="primary">nadK</name>
    <name type="ordered locus">Hac_1771</name>
</gene>
<comment type="function">
    <text evidence="1">Involved in the regulation of the intracellular balance of NAD and NADP, and is a key enzyme in the biosynthesis of NADP. Catalyzes specifically the phosphorylation on 2'-hydroxyl of the adenosine moiety of NAD to yield NADP.</text>
</comment>
<comment type="catalytic activity">
    <reaction evidence="1">
        <text>NAD(+) + ATP = ADP + NADP(+) + H(+)</text>
        <dbReference type="Rhea" id="RHEA:18629"/>
        <dbReference type="ChEBI" id="CHEBI:15378"/>
        <dbReference type="ChEBI" id="CHEBI:30616"/>
        <dbReference type="ChEBI" id="CHEBI:57540"/>
        <dbReference type="ChEBI" id="CHEBI:58349"/>
        <dbReference type="ChEBI" id="CHEBI:456216"/>
        <dbReference type="EC" id="2.7.1.23"/>
    </reaction>
</comment>
<comment type="cofactor">
    <cofactor evidence="1">
        <name>a divalent metal cation</name>
        <dbReference type="ChEBI" id="CHEBI:60240"/>
    </cofactor>
</comment>
<comment type="subcellular location">
    <subcellularLocation>
        <location evidence="1">Cytoplasm</location>
    </subcellularLocation>
</comment>
<comment type="similarity">
    <text evidence="1">Belongs to the NAD kinase family.</text>
</comment>
<reference key="1">
    <citation type="journal article" date="2006" name="PLoS Genet.">
        <title>Who ate whom? Adaptive Helicobacter genomic changes that accompanied a host jump from early humans to large felines.</title>
        <authorList>
            <person name="Eppinger M."/>
            <person name="Baar C."/>
            <person name="Linz B."/>
            <person name="Raddatz G."/>
            <person name="Lanz C."/>
            <person name="Keller H."/>
            <person name="Morelli G."/>
            <person name="Gressmann H."/>
            <person name="Achtman M."/>
            <person name="Schuster S.C."/>
        </authorList>
    </citation>
    <scope>NUCLEOTIDE SEQUENCE [LARGE SCALE GENOMIC DNA]</scope>
    <source>
        <strain>Sheeba</strain>
    </source>
</reference>
<dbReference type="EC" id="2.7.1.23" evidence="1"/>
<dbReference type="EMBL" id="AM260522">
    <property type="protein sequence ID" value="CAK00466.1"/>
    <property type="molecule type" value="Genomic_DNA"/>
</dbReference>
<dbReference type="RefSeq" id="WP_011578548.1">
    <property type="nucleotide sequence ID" value="NC_008229.1"/>
</dbReference>
<dbReference type="SMR" id="Q17V60"/>
<dbReference type="STRING" id="382638.Hac_1771"/>
<dbReference type="GeneID" id="31758999"/>
<dbReference type="KEGG" id="hac:Hac_1771"/>
<dbReference type="eggNOG" id="COG0061">
    <property type="taxonomic scope" value="Bacteria"/>
</dbReference>
<dbReference type="HOGENOM" id="CLU_008831_0_3_7"/>
<dbReference type="OrthoDB" id="9774737at2"/>
<dbReference type="BioCyc" id="HACI382638:HAC_RS07515-MONOMER"/>
<dbReference type="Proteomes" id="UP000000775">
    <property type="component" value="Chromosome"/>
</dbReference>
<dbReference type="GO" id="GO:0005737">
    <property type="term" value="C:cytoplasm"/>
    <property type="evidence" value="ECO:0007669"/>
    <property type="project" value="UniProtKB-SubCell"/>
</dbReference>
<dbReference type="GO" id="GO:0005524">
    <property type="term" value="F:ATP binding"/>
    <property type="evidence" value="ECO:0007669"/>
    <property type="project" value="UniProtKB-KW"/>
</dbReference>
<dbReference type="GO" id="GO:0046872">
    <property type="term" value="F:metal ion binding"/>
    <property type="evidence" value="ECO:0007669"/>
    <property type="project" value="UniProtKB-UniRule"/>
</dbReference>
<dbReference type="GO" id="GO:0051287">
    <property type="term" value="F:NAD binding"/>
    <property type="evidence" value="ECO:0007669"/>
    <property type="project" value="UniProtKB-ARBA"/>
</dbReference>
<dbReference type="GO" id="GO:0003951">
    <property type="term" value="F:NAD+ kinase activity"/>
    <property type="evidence" value="ECO:0007669"/>
    <property type="project" value="UniProtKB-UniRule"/>
</dbReference>
<dbReference type="GO" id="GO:0019674">
    <property type="term" value="P:NAD metabolic process"/>
    <property type="evidence" value="ECO:0007669"/>
    <property type="project" value="InterPro"/>
</dbReference>
<dbReference type="GO" id="GO:0006741">
    <property type="term" value="P:NADP biosynthetic process"/>
    <property type="evidence" value="ECO:0007669"/>
    <property type="project" value="UniProtKB-UniRule"/>
</dbReference>
<dbReference type="Gene3D" id="3.40.50.10330">
    <property type="entry name" value="Probable inorganic polyphosphate/atp-NAD kinase, domain 1"/>
    <property type="match status" value="1"/>
</dbReference>
<dbReference type="Gene3D" id="2.60.200.30">
    <property type="entry name" value="Probable inorganic polyphosphate/atp-NAD kinase, domain 2"/>
    <property type="match status" value="1"/>
</dbReference>
<dbReference type="HAMAP" id="MF_00361">
    <property type="entry name" value="NAD_kinase"/>
    <property type="match status" value="1"/>
</dbReference>
<dbReference type="InterPro" id="IPR017438">
    <property type="entry name" value="ATP-NAD_kinase_N"/>
</dbReference>
<dbReference type="InterPro" id="IPR017437">
    <property type="entry name" value="ATP-NAD_kinase_PpnK-typ_C"/>
</dbReference>
<dbReference type="InterPro" id="IPR016064">
    <property type="entry name" value="NAD/diacylglycerol_kinase_sf"/>
</dbReference>
<dbReference type="InterPro" id="IPR002504">
    <property type="entry name" value="NADK"/>
</dbReference>
<dbReference type="PANTHER" id="PTHR20275">
    <property type="entry name" value="NAD KINASE"/>
    <property type="match status" value="1"/>
</dbReference>
<dbReference type="PANTHER" id="PTHR20275:SF0">
    <property type="entry name" value="NAD KINASE"/>
    <property type="match status" value="1"/>
</dbReference>
<dbReference type="Pfam" id="PF01513">
    <property type="entry name" value="NAD_kinase"/>
    <property type="match status" value="1"/>
</dbReference>
<dbReference type="Pfam" id="PF20143">
    <property type="entry name" value="NAD_kinase_C"/>
    <property type="match status" value="1"/>
</dbReference>
<dbReference type="SUPFAM" id="SSF111331">
    <property type="entry name" value="NAD kinase/diacylglycerol kinase-like"/>
    <property type="match status" value="1"/>
</dbReference>
<name>NADK_HELAH</name>
<evidence type="ECO:0000255" key="1">
    <source>
        <dbReference type="HAMAP-Rule" id="MF_00361"/>
    </source>
</evidence>
<keyword id="KW-0067">ATP-binding</keyword>
<keyword id="KW-0963">Cytoplasm</keyword>
<keyword id="KW-0418">Kinase</keyword>
<keyword id="KW-0520">NAD</keyword>
<keyword id="KW-0521">NADP</keyword>
<keyword id="KW-0547">Nucleotide-binding</keyword>
<keyword id="KW-0808">Transferase</keyword>
<accession>Q17V60</accession>
<sequence>MKDSHQTIGVFVRPTHHQNPLFSELTQAKEWVLRLLEDEGFESFMADDNGLKDERLIEKAYAFLCLGGDGTILGALRMMHSYNKPCFGVRMGNLGYLTAIELNELKDFLQNLKHNKIKLEEHLALEGRIEEISFYAINEIVITRKEALGILDIEACVSHTPFNTYKGDGLIIATPLGSTAYNLSAHGPIVHALNQSYVLTPLCDFSLTQRPLVLGAEFCLSFCANKDALVIIDGQATYDLKANQKLYIQKSPTTTKLLQKNSRDYFKVLKEKLLWGESSSKKN</sequence>
<feature type="chain" id="PRO_1000005414" description="NAD kinase">
    <location>
        <begin position="1"/>
        <end position="283"/>
    </location>
</feature>
<feature type="active site" description="Proton acceptor" evidence="1">
    <location>
        <position position="69"/>
    </location>
</feature>
<feature type="binding site" evidence="1">
    <location>
        <begin position="69"/>
        <end position="70"/>
    </location>
    <ligand>
        <name>NAD(+)</name>
        <dbReference type="ChEBI" id="CHEBI:57540"/>
    </ligand>
</feature>
<feature type="binding site" evidence="1">
    <location>
        <begin position="138"/>
        <end position="139"/>
    </location>
    <ligand>
        <name>NAD(+)</name>
        <dbReference type="ChEBI" id="CHEBI:57540"/>
    </ligand>
</feature>
<feature type="binding site" evidence="1">
    <location>
        <position position="166"/>
    </location>
    <ligand>
        <name>NAD(+)</name>
        <dbReference type="ChEBI" id="CHEBI:57540"/>
    </ligand>
</feature>
<feature type="binding site" evidence="1">
    <location>
        <position position="168"/>
    </location>
    <ligand>
        <name>NAD(+)</name>
        <dbReference type="ChEBI" id="CHEBI:57540"/>
    </ligand>
</feature>
<feature type="binding site" evidence="1">
    <location>
        <position position="176"/>
    </location>
    <ligand>
        <name>NAD(+)</name>
        <dbReference type="ChEBI" id="CHEBI:57540"/>
    </ligand>
</feature>
<feature type="binding site" evidence="1">
    <location>
        <begin position="179"/>
        <end position="184"/>
    </location>
    <ligand>
        <name>NAD(+)</name>
        <dbReference type="ChEBI" id="CHEBI:57540"/>
    </ligand>
</feature>
<feature type="binding site" evidence="1">
    <location>
        <position position="235"/>
    </location>
    <ligand>
        <name>NAD(+)</name>
        <dbReference type="ChEBI" id="CHEBI:57540"/>
    </ligand>
</feature>
<proteinExistence type="inferred from homology"/>